<reference key="1">
    <citation type="journal article" date="1994" name="Infect. Immun.">
        <title>Regulation of Actinobacillus actinomycetemcomitans leukotoxin expression: analysis of the promoter regions of leukotoxic and minimally leukotoxic strains.</title>
        <authorList>
            <person name="Brogan J.M."/>
            <person name="Lally E.T."/>
            <person name="Poulsen K."/>
            <person name="Kilian M."/>
            <person name="Demuth D.R."/>
        </authorList>
    </citation>
    <scope>NUCLEOTIDE SEQUENCE [GENOMIC DNA]</scope>
</reference>
<name>GLYA_AGGAC</name>
<organism>
    <name type="scientific">Aggregatibacter actinomycetemcomitans</name>
    <name type="common">Actinobacillus actinomycetemcomitans</name>
    <name type="synonym">Haemophilus actinomycetemcomitans</name>
    <dbReference type="NCBI Taxonomy" id="714"/>
    <lineage>
        <taxon>Bacteria</taxon>
        <taxon>Pseudomonadati</taxon>
        <taxon>Pseudomonadota</taxon>
        <taxon>Gammaproteobacteria</taxon>
        <taxon>Pasteurellales</taxon>
        <taxon>Pasteurellaceae</taxon>
        <taxon>Aggregatibacter</taxon>
    </lineage>
</organism>
<comment type="function">
    <text evidence="1">Catalyzes the reversible interconversion of serine and glycine with tetrahydrofolate (THF) serving as the one-carbon carrier. This reaction serves as the major source of one-carbon groups required for the biosynthesis of purines, thymidylate, methionine, and other important biomolecules. Also exhibits THF-independent aldolase activity toward beta-hydroxyamino acids, producing glycine and aldehydes, via a retro-aldol mechanism.</text>
</comment>
<comment type="catalytic activity">
    <reaction evidence="1">
        <text>(6R)-5,10-methylene-5,6,7,8-tetrahydrofolate + glycine + H2O = (6S)-5,6,7,8-tetrahydrofolate + L-serine</text>
        <dbReference type="Rhea" id="RHEA:15481"/>
        <dbReference type="ChEBI" id="CHEBI:15377"/>
        <dbReference type="ChEBI" id="CHEBI:15636"/>
        <dbReference type="ChEBI" id="CHEBI:33384"/>
        <dbReference type="ChEBI" id="CHEBI:57305"/>
        <dbReference type="ChEBI" id="CHEBI:57453"/>
        <dbReference type="EC" id="2.1.2.1"/>
    </reaction>
</comment>
<comment type="cofactor">
    <cofactor evidence="1">
        <name>pyridoxal 5'-phosphate</name>
        <dbReference type="ChEBI" id="CHEBI:597326"/>
    </cofactor>
</comment>
<comment type="pathway">
    <text evidence="1">One-carbon metabolism; tetrahydrofolate interconversion.</text>
</comment>
<comment type="pathway">
    <text evidence="1">Amino-acid biosynthesis; glycine biosynthesis; glycine from L-serine: step 1/1.</text>
</comment>
<comment type="subunit">
    <text evidence="1">Homodimer.</text>
</comment>
<comment type="subcellular location">
    <subcellularLocation>
        <location evidence="1">Cytoplasm</location>
    </subcellularLocation>
</comment>
<comment type="similarity">
    <text evidence="1">Belongs to the SHMT family.</text>
</comment>
<accession>P34894</accession>
<gene>
    <name evidence="1" type="primary">glyA</name>
</gene>
<proteinExistence type="inferred from homology"/>
<sequence length="420" mass="45790">MFKKSMNIADYDPVLWQAIENENRRQEEHIELIASENYASPRVMQAQGSQFTNKYAEGYPGKRYYGGCEYADIVEQLAIERAKELFGADYVNVQPHSGSQANAAVYMGLLNPGDTILGMSLAHGGHLTHGASVSFSGKIYHAEQYGITDEGLIDYDALRKQAHDVKPKMIVGGFSAYSQVVDWKKMREIADEVGAYLFVDMAHVAGLVAAGIYPNPLPYAHVVTTTTHKTLGGPRGGLILSSCGDEEIYKKLNSAVFPAGQGGPLVHIIAAKAVCFKEALEPEYKVYQQNVLKNAKAMVEVFKQRCYKVVSNGTENHLFLVDLVSHGLTGKAADAALGKANITVNKNSVPNDPQKPFITSGIRVGTPSVTRRGFNEADVKELAGWMCDVLDAIGKDNEAEVIADTKDKVLAICKRLPVYA</sequence>
<protein>
    <recommendedName>
        <fullName evidence="1">Serine hydroxymethyltransferase</fullName>
        <shortName evidence="1">SHMT</shortName>
        <shortName evidence="1">Serine methylase</shortName>
        <ecNumber evidence="1">2.1.2.1</ecNumber>
    </recommendedName>
</protein>
<keyword id="KW-0028">Amino-acid biosynthesis</keyword>
<keyword id="KW-0963">Cytoplasm</keyword>
<keyword id="KW-0554">One-carbon metabolism</keyword>
<keyword id="KW-0663">Pyridoxal phosphate</keyword>
<keyword id="KW-0808">Transferase</keyword>
<evidence type="ECO:0000255" key="1">
    <source>
        <dbReference type="HAMAP-Rule" id="MF_00051"/>
    </source>
</evidence>
<dbReference type="EC" id="2.1.2.1" evidence="1"/>
<dbReference type="EMBL" id="Z23269">
    <property type="protein sequence ID" value="CAA80807.1"/>
    <property type="molecule type" value="Genomic_DNA"/>
</dbReference>
<dbReference type="PIR" id="S34379">
    <property type="entry name" value="S34379"/>
</dbReference>
<dbReference type="SMR" id="P34894"/>
<dbReference type="STRING" id="714.ACT75_09590"/>
<dbReference type="eggNOG" id="COG0112">
    <property type="taxonomic scope" value="Bacteria"/>
</dbReference>
<dbReference type="UniPathway" id="UPA00193"/>
<dbReference type="UniPathway" id="UPA00288">
    <property type="reaction ID" value="UER01023"/>
</dbReference>
<dbReference type="GO" id="GO:0005829">
    <property type="term" value="C:cytosol"/>
    <property type="evidence" value="ECO:0007669"/>
    <property type="project" value="TreeGrafter"/>
</dbReference>
<dbReference type="GO" id="GO:0004372">
    <property type="term" value="F:glycine hydroxymethyltransferase activity"/>
    <property type="evidence" value="ECO:0007669"/>
    <property type="project" value="UniProtKB-UniRule"/>
</dbReference>
<dbReference type="GO" id="GO:0030170">
    <property type="term" value="F:pyridoxal phosphate binding"/>
    <property type="evidence" value="ECO:0007669"/>
    <property type="project" value="UniProtKB-UniRule"/>
</dbReference>
<dbReference type="GO" id="GO:0019264">
    <property type="term" value="P:glycine biosynthetic process from serine"/>
    <property type="evidence" value="ECO:0007669"/>
    <property type="project" value="UniProtKB-UniRule"/>
</dbReference>
<dbReference type="GO" id="GO:0035999">
    <property type="term" value="P:tetrahydrofolate interconversion"/>
    <property type="evidence" value="ECO:0007669"/>
    <property type="project" value="UniProtKB-UniRule"/>
</dbReference>
<dbReference type="CDD" id="cd00378">
    <property type="entry name" value="SHMT"/>
    <property type="match status" value="1"/>
</dbReference>
<dbReference type="FunFam" id="3.40.640.10:FF:000001">
    <property type="entry name" value="Serine hydroxymethyltransferase"/>
    <property type="match status" value="1"/>
</dbReference>
<dbReference type="FunFam" id="3.90.1150.10:FF:000003">
    <property type="entry name" value="Serine hydroxymethyltransferase"/>
    <property type="match status" value="1"/>
</dbReference>
<dbReference type="Gene3D" id="3.90.1150.10">
    <property type="entry name" value="Aspartate Aminotransferase, domain 1"/>
    <property type="match status" value="1"/>
</dbReference>
<dbReference type="Gene3D" id="3.40.640.10">
    <property type="entry name" value="Type I PLP-dependent aspartate aminotransferase-like (Major domain)"/>
    <property type="match status" value="1"/>
</dbReference>
<dbReference type="HAMAP" id="MF_00051">
    <property type="entry name" value="SHMT"/>
    <property type="match status" value="1"/>
</dbReference>
<dbReference type="InterPro" id="IPR015424">
    <property type="entry name" value="PyrdxlP-dep_Trfase"/>
</dbReference>
<dbReference type="InterPro" id="IPR015421">
    <property type="entry name" value="PyrdxlP-dep_Trfase_major"/>
</dbReference>
<dbReference type="InterPro" id="IPR015422">
    <property type="entry name" value="PyrdxlP-dep_Trfase_small"/>
</dbReference>
<dbReference type="InterPro" id="IPR001085">
    <property type="entry name" value="Ser_HO-MeTrfase"/>
</dbReference>
<dbReference type="InterPro" id="IPR049943">
    <property type="entry name" value="Ser_HO-MeTrfase-like"/>
</dbReference>
<dbReference type="InterPro" id="IPR019798">
    <property type="entry name" value="Ser_HO-MeTrfase_PLP_BS"/>
</dbReference>
<dbReference type="InterPro" id="IPR039429">
    <property type="entry name" value="SHMT-like_dom"/>
</dbReference>
<dbReference type="NCBIfam" id="NF000586">
    <property type="entry name" value="PRK00011.1"/>
    <property type="match status" value="1"/>
</dbReference>
<dbReference type="PANTHER" id="PTHR11680">
    <property type="entry name" value="SERINE HYDROXYMETHYLTRANSFERASE"/>
    <property type="match status" value="1"/>
</dbReference>
<dbReference type="PANTHER" id="PTHR11680:SF50">
    <property type="entry name" value="SERINE HYDROXYMETHYLTRANSFERASE"/>
    <property type="match status" value="1"/>
</dbReference>
<dbReference type="Pfam" id="PF00464">
    <property type="entry name" value="SHMT"/>
    <property type="match status" value="1"/>
</dbReference>
<dbReference type="PIRSF" id="PIRSF000412">
    <property type="entry name" value="SHMT"/>
    <property type="match status" value="1"/>
</dbReference>
<dbReference type="SUPFAM" id="SSF53383">
    <property type="entry name" value="PLP-dependent transferases"/>
    <property type="match status" value="1"/>
</dbReference>
<dbReference type="PROSITE" id="PS00096">
    <property type="entry name" value="SHMT"/>
    <property type="match status" value="1"/>
</dbReference>
<feature type="chain" id="PRO_0000113518" description="Serine hydroxymethyltransferase">
    <location>
        <begin position="1"/>
        <end position="420"/>
    </location>
</feature>
<feature type="binding site" evidence="1">
    <location>
        <position position="121"/>
    </location>
    <ligand>
        <name>(6S)-5,6,7,8-tetrahydrofolate</name>
        <dbReference type="ChEBI" id="CHEBI:57453"/>
    </ligand>
</feature>
<feature type="binding site" evidence="1">
    <location>
        <begin position="125"/>
        <end position="127"/>
    </location>
    <ligand>
        <name>(6S)-5,6,7,8-tetrahydrofolate</name>
        <dbReference type="ChEBI" id="CHEBI:57453"/>
    </ligand>
</feature>
<feature type="site" description="Plays an important role in substrate specificity" evidence="1">
    <location>
        <position position="228"/>
    </location>
</feature>
<feature type="modified residue" description="N6-(pyridoxal phosphate)lysine" evidence="1">
    <location>
        <position position="229"/>
    </location>
</feature>